<organism>
    <name type="scientific">Panax ginseng</name>
    <name type="common">Korean ginseng</name>
    <dbReference type="NCBI Taxonomy" id="4054"/>
    <lineage>
        <taxon>Eukaryota</taxon>
        <taxon>Viridiplantae</taxon>
        <taxon>Streptophyta</taxon>
        <taxon>Embryophyta</taxon>
        <taxon>Tracheophyta</taxon>
        <taxon>Spermatophyta</taxon>
        <taxon>Magnoliopsida</taxon>
        <taxon>eudicotyledons</taxon>
        <taxon>Gunneridae</taxon>
        <taxon>Pentapetalae</taxon>
        <taxon>asterids</taxon>
        <taxon>campanulids</taxon>
        <taxon>Apiales</taxon>
        <taxon>Araliaceae</taxon>
        <taxon>Panax</taxon>
    </lineage>
</organism>
<keyword id="KW-0349">Heme</keyword>
<keyword id="KW-0408">Iron</keyword>
<keyword id="KW-0414">Isoprene biosynthesis</keyword>
<keyword id="KW-0472">Membrane</keyword>
<keyword id="KW-0479">Metal-binding</keyword>
<keyword id="KW-0503">Monooxygenase</keyword>
<keyword id="KW-0560">Oxidoreductase</keyword>
<keyword id="KW-0812">Transmembrane</keyword>
<keyword id="KW-1133">Transmembrane helix</keyword>
<protein>
    <recommendedName>
        <fullName evidence="8">Protopanaxadiol 6-hydroxylase</fullName>
        <shortName evidence="8">P6H</shortName>
        <ecNumber evidence="3">1.14.14.121</ecNumber>
    </recommendedName>
    <alternativeName>
        <fullName evidence="8">Cytochrome P450 CYP716A53v2</fullName>
    </alternativeName>
    <alternativeName>
        <fullName evidence="8">Protopanaxatriol synthase</fullName>
        <shortName evidence="8">PgPPTS</shortName>
    </alternativeName>
</protein>
<dbReference type="EC" id="1.14.14.121" evidence="3"/>
<dbReference type="EMBL" id="JX036031">
    <property type="protein sequence ID" value="AFO63031.1"/>
    <property type="molecule type" value="mRNA"/>
</dbReference>
<dbReference type="SMR" id="I7CT85"/>
<dbReference type="KEGG" id="ag:AFO63031"/>
<dbReference type="BioCyc" id="MetaCyc:MONOMER-18262"/>
<dbReference type="BRENDA" id="1.14.13.184">
    <property type="organism ID" value="7895"/>
</dbReference>
<dbReference type="BRENDA" id="1.14.14.121">
    <property type="organism ID" value="7895"/>
</dbReference>
<dbReference type="UniPathway" id="UPA00213"/>
<dbReference type="GO" id="GO:0016020">
    <property type="term" value="C:membrane"/>
    <property type="evidence" value="ECO:0007669"/>
    <property type="project" value="UniProtKB-SubCell"/>
</dbReference>
<dbReference type="GO" id="GO:0020037">
    <property type="term" value="F:heme binding"/>
    <property type="evidence" value="ECO:0007669"/>
    <property type="project" value="InterPro"/>
</dbReference>
<dbReference type="GO" id="GO:0005506">
    <property type="term" value="F:iron ion binding"/>
    <property type="evidence" value="ECO:0007669"/>
    <property type="project" value="InterPro"/>
</dbReference>
<dbReference type="GO" id="GO:0102557">
    <property type="term" value="F:protopanaxadiol 6-hydroxylase activity"/>
    <property type="evidence" value="ECO:0007669"/>
    <property type="project" value="UniProtKB-EC"/>
</dbReference>
<dbReference type="GO" id="GO:0002238">
    <property type="term" value="P:response to molecule of fungal origin"/>
    <property type="evidence" value="ECO:0000270"/>
    <property type="project" value="UniProtKB"/>
</dbReference>
<dbReference type="GO" id="GO:0016125">
    <property type="term" value="P:sterol metabolic process"/>
    <property type="evidence" value="ECO:0007669"/>
    <property type="project" value="TreeGrafter"/>
</dbReference>
<dbReference type="GO" id="GO:0016114">
    <property type="term" value="P:terpenoid biosynthetic process"/>
    <property type="evidence" value="ECO:0007669"/>
    <property type="project" value="UniProtKB-UniPathway"/>
</dbReference>
<dbReference type="CDD" id="cd11043">
    <property type="entry name" value="CYP90-like"/>
    <property type="match status" value="1"/>
</dbReference>
<dbReference type="FunFam" id="1.10.630.10:FF:000022">
    <property type="entry name" value="Taxadiene 5-alpha hydroxylase"/>
    <property type="match status" value="1"/>
</dbReference>
<dbReference type="Gene3D" id="1.10.630.10">
    <property type="entry name" value="Cytochrome P450"/>
    <property type="match status" value="1"/>
</dbReference>
<dbReference type="InterPro" id="IPR001128">
    <property type="entry name" value="Cyt_P450"/>
</dbReference>
<dbReference type="InterPro" id="IPR017972">
    <property type="entry name" value="Cyt_P450_CS"/>
</dbReference>
<dbReference type="InterPro" id="IPR002401">
    <property type="entry name" value="Cyt_P450_E_grp-I"/>
</dbReference>
<dbReference type="InterPro" id="IPR036396">
    <property type="entry name" value="Cyt_P450_sf"/>
</dbReference>
<dbReference type="PANTHER" id="PTHR24286:SF53">
    <property type="entry name" value="BETA-AMYRIN 28-OXIDASE-LIKE"/>
    <property type="match status" value="1"/>
</dbReference>
<dbReference type="PANTHER" id="PTHR24286">
    <property type="entry name" value="CYTOCHROME P450 26"/>
    <property type="match status" value="1"/>
</dbReference>
<dbReference type="Pfam" id="PF00067">
    <property type="entry name" value="p450"/>
    <property type="match status" value="1"/>
</dbReference>
<dbReference type="PRINTS" id="PR00463">
    <property type="entry name" value="EP450I"/>
</dbReference>
<dbReference type="PRINTS" id="PR00385">
    <property type="entry name" value="P450"/>
</dbReference>
<dbReference type="SUPFAM" id="SSF48264">
    <property type="entry name" value="Cytochrome P450"/>
    <property type="match status" value="1"/>
</dbReference>
<dbReference type="PROSITE" id="PS00086">
    <property type="entry name" value="CYTOCHROME_P450"/>
    <property type="match status" value="1"/>
</dbReference>
<proteinExistence type="evidence at protein level"/>
<evidence type="ECO:0000250" key="1">
    <source>
        <dbReference type="UniProtKB" id="Q96242"/>
    </source>
</evidence>
<evidence type="ECO:0000255" key="2"/>
<evidence type="ECO:0000269" key="3">
    <source>
    </source>
</evidence>
<evidence type="ECO:0000269" key="4">
    <source>
    </source>
</evidence>
<evidence type="ECO:0000269" key="5">
    <source>
    </source>
</evidence>
<evidence type="ECO:0000269" key="6">
    <source>
    </source>
</evidence>
<evidence type="ECO:0000269" key="7">
    <source>
    </source>
</evidence>
<evidence type="ECO:0000303" key="8">
    <source>
    </source>
</evidence>
<evidence type="ECO:0000303" key="9">
    <source>
    </source>
</evidence>
<evidence type="ECO:0000303" key="10">
    <source>
    </source>
</evidence>
<evidence type="ECO:0000305" key="11"/>
<name>C7A53_PANGI</name>
<sequence>MDLFISSQLLLLLVFCLFLFWNFKPSSQNKLPPGKTGWPIIGETLEFISCGQKGNPEKFVTQRMNKYSPDVFTTSLAGEKMVVFCGASGNKFIFSNENKLVVSWWPPAISKILTATIPSVEKSKALRSLIVEFLKPEALHKFISVMDRTTRQHFEDKWNGSTEVKAFAMSESLTFELACWLLFSINDPVQVQKLSHLFEKVKAGLLSLPLNFPGTAFNRGIKAANLIRKELSVVIKQRRSDKLQTRKDLLSHVMLSNGEGEKFFSEMDIADVVLNLLIASHDTTSSAMGSVVYFLADHPHIYAKVLTEQMEIAKSKGAEELLSWEDIKRMKYSRNVINEAMRLVPPSQGGFKVVTSKFSYANFIIPKGWKIFWSVYSTHKDPKYFKNPEEFDPSRFEGDGPMPFTFIPFGGGPRMCPGSEFARLEVLIFMHHLVTNFKWEKVFPNEKIIYTPFPFPENGLPIRLSPCTL</sequence>
<feature type="chain" id="PRO_0000425880" description="Protopanaxadiol 6-hydroxylase">
    <location>
        <begin position="1"/>
        <end position="469"/>
    </location>
</feature>
<feature type="transmembrane region" description="Helical" evidence="2">
    <location>
        <begin position="3"/>
        <end position="23"/>
    </location>
</feature>
<feature type="binding site" description="axial binding residue" evidence="1">
    <location>
        <position position="416"/>
    </location>
    <ligand>
        <name>heme</name>
        <dbReference type="ChEBI" id="CHEBI:30413"/>
    </ligand>
    <ligandPart>
        <name>Fe</name>
        <dbReference type="ChEBI" id="CHEBI:18248"/>
    </ligandPart>
</feature>
<gene>
    <name evidence="8 10" type="primary">CYP716A53v2</name>
    <name evidence="8 10" type="synonym">PPTS</name>
</gene>
<accession>I7CT85</accession>
<reference key="1">
    <citation type="journal article" date="2012" name="Plant Cell Physiol.">
        <title>Cytochrome P450 CYP716A53v2 catalyzes the formation of protopanaxatriol from protopanaxadiol during ginsenoside biosynthesis in Panax ginseng.</title>
        <authorList>
            <person name="Han J.Y."/>
            <person name="Hwang H.S."/>
            <person name="Choi S.W."/>
            <person name="Kim H.J."/>
            <person name="Choi Y.E."/>
        </authorList>
    </citation>
    <scope>NUCLEOTIDE SEQUENCE [MRNA]</scope>
    <scope>FUNCTION</scope>
    <scope>CATALYTIC ACTIVITY</scope>
    <scope>TISSUE SPECIFICITY</scope>
    <scope>LACK OF INDUCTION BY MEJA</scope>
</reference>
<reference key="2">
    <citation type="journal article" date="2008" name="Biotechnol. Bioeng.">
        <title>Protopanaxadiol 6-hydroxylase and its role in regulating the ginsenoside heterogeneity in Panax notoginseng cells.</title>
        <authorList>
            <person name="Yue C.J."/>
            <person name="Zhou X."/>
            <person name="Zhong J.J."/>
        </authorList>
    </citation>
    <scope>IDENTIFICATION</scope>
</reference>
<reference key="3">
    <citation type="journal article" date="2013" name="J. Biotechnol.">
        <title>Enhancement of ginsenoside biosynthesis in cell cultures of Panax ginseng by N,N'-dicyclohexylcarbodiimide elicitation.</title>
        <authorList>
            <person name="Huang C."/>
            <person name="Qian Z.-G."/>
            <person name="Zhong J.-J."/>
        </authorList>
    </citation>
    <scope>ACTIVITY REGULATION</scope>
</reference>
<reference key="4">
    <citation type="journal article" date="2015" name="Biotechnol. Appl. Biochem.">
        <title>Enhancement of ginsenoside biosynthesis and secretion by Tween 80 in Panax ginseng hairy roots.</title>
        <authorList>
            <person name="Liang Y."/>
            <person name="Wu J."/>
            <person name="Li Y."/>
            <person name="Li J."/>
            <person name="Ouyang Y."/>
            <person name="He Z."/>
            <person name="Zhao S."/>
        </authorList>
    </citation>
    <scope>INDUCTION BY TWEEN 80</scope>
</reference>
<reference key="5">
    <citation type="journal article" date="2016" name="J. Biotechnol.">
        <title>Fungal elicitors enhance ginsenosides biosynthesis, expression of functional genes as well as signal molecules accumulation in adventitious roots of Panax ginseng C. A. Mey.</title>
        <authorList>
            <person name="Li J."/>
            <person name="Liu S."/>
            <person name="Wang J."/>
            <person name="Li J."/>
            <person name="Liu D."/>
            <person name="Li J."/>
            <person name="Gao W."/>
        </authorList>
    </citation>
    <scope>FUNCTION</scope>
    <scope>INDUCTION BY ASPERGILLUS NIGER</scope>
</reference>
<reference key="6">
    <citation type="journal article" date="2018" name="Biotechnol. Appl. Biochem.">
        <title>Advances in ginsenoside biosynthesis and metabolic regulation.</title>
        <authorList>
            <person name="Lu J."/>
            <person name="Li J."/>
            <person name="Wang S."/>
            <person name="Yao L."/>
            <person name="Liang W."/>
            <person name="Wang J."/>
            <person name="Gao W."/>
        </authorList>
    </citation>
    <scope>REVIEW</scope>
</reference>
<reference key="7">
    <citation type="journal article" date="2018" name="Molecules">
        <title>Progress on the studies of the key enzymes of ginsenoside biosynthesis.</title>
        <authorList>
            <person name="Yang J.-L."/>
            <person name="Hu Z.-F."/>
            <person name="Zhang T.-T."/>
            <person name="Gu A.-D."/>
            <person name="Gong T."/>
            <person name="Zhu P."/>
        </authorList>
    </citation>
    <scope>REVIEW</scope>
    <scope>NOMENCLATURE</scope>
</reference>
<reference key="8">
    <citation type="journal article" date="2018" name="Molecules">
        <title>The effects of environmental factors on ginsenoside biosynthetic enzyme gene expression and saponin abundance.</title>
        <authorList>
            <person name="Zhang T."/>
            <person name="Han M."/>
            <person name="Yang L."/>
            <person name="Han Z."/>
            <person name="Cheng L."/>
            <person name="Sun Z."/>
            <person name="Yang L."/>
        </authorList>
    </citation>
    <scope>TISSUE SPECIFICITY</scope>
    <scope>DEVELOPMENTAL STAGE</scope>
    <scope>INDUCTION BY ABIOTIC FACTORS</scope>
</reference>
<comment type="function">
    <text evidence="3 6 9">Component of the dammarane-type triterpene saponins (e.g. PPT-type ginsenosides or panaxosides) biosynthetic pathway (PubMed:27746309, PubMed:29378087). Catalyzes the formation of protopanaxatriol from protopanaxadiol during ginsenoside biosynthesis, a class of tetracyclic triterpenoid saponins.</text>
</comment>
<comment type="catalytic activity">
    <reaction evidence="3">
        <text>(20S)-protopanaxadiol + reduced [NADPH--hemoprotein reductase] + O2 = (20S)-protopanaxatriol + oxidized [NADPH--hemoprotein reductase] + H2O + H(+)</text>
        <dbReference type="Rhea" id="RHEA:22272"/>
        <dbReference type="Rhea" id="RHEA-COMP:11964"/>
        <dbReference type="Rhea" id="RHEA-COMP:11965"/>
        <dbReference type="ChEBI" id="CHEBI:15377"/>
        <dbReference type="ChEBI" id="CHEBI:15378"/>
        <dbReference type="ChEBI" id="CHEBI:15379"/>
        <dbReference type="ChEBI" id="CHEBI:57618"/>
        <dbReference type="ChEBI" id="CHEBI:58210"/>
        <dbReference type="ChEBI" id="CHEBI:75950"/>
        <dbReference type="ChEBI" id="CHEBI:75951"/>
        <dbReference type="EC" id="1.14.14.121"/>
    </reaction>
</comment>
<comment type="cofactor">
    <cofactor evidence="1">
        <name>heme</name>
        <dbReference type="ChEBI" id="CHEBI:30413"/>
    </cofactor>
</comment>
<comment type="activity regulation">
    <text evidence="4">Activated by N,N'-dicyclohexylcarbodiimide (DCCD) thus leading to increased ginsenosides accumulation.</text>
</comment>
<comment type="pathway">
    <text evidence="11">Secondary metabolite biosynthesis; terpenoid biosynthesis.</text>
</comment>
<comment type="subcellular location">
    <subcellularLocation>
        <location evidence="2">Membrane</location>
        <topology evidence="2">Single-pass membrane protein</topology>
    </subcellularLocation>
</comment>
<comment type="tissue specificity">
    <text evidence="3 7">Accumulates ubiquitously in all organs of plants, including roots, stems and leaves.</text>
</comment>
<comment type="developmental stage">
    <text evidence="7">Accumulates strongly from the leaf opened to the green fruit stage (PubMed:30577538). High levels are maintained until the red fruit stage, but decrease drastically during the root growth stage (PubMed:30577538).</text>
</comment>
<comment type="induction">
    <text evidence="3 5 6 7">Expression is not affected by methyl jasmonate (MeJA) treatment (PubMed:22875608). Induced by A.niger mycelium-derived elicitor, thus improving ginsenosides production in adventitious roots culture (PubMed:27746309). Slightly induced by Tween 80 (PubMed:24889095). Influenced in roots by relative humidity and photosynthetically active radiation (PAR), and in leaves by temperature and rain (PubMed:30577538).</text>
</comment>
<comment type="similarity">
    <text evidence="11">Belongs to the cytochrome P450 family.</text>
</comment>